<keyword id="KW-0997">Cell inner membrane</keyword>
<keyword id="KW-1003">Cell membrane</keyword>
<keyword id="KW-0133">Cell shape</keyword>
<keyword id="KW-0961">Cell wall biogenesis/degradation</keyword>
<keyword id="KW-0328">Glycosyltransferase</keyword>
<keyword id="KW-0472">Membrane</keyword>
<keyword id="KW-0573">Peptidoglycan synthesis</keyword>
<keyword id="KW-0808">Transferase</keyword>
<keyword id="KW-0812">Transmembrane</keyword>
<keyword id="KW-1133">Transmembrane helix</keyword>
<protein>
    <recommendedName>
        <fullName evidence="1">Biosynthetic peptidoglycan transglycosylase</fullName>
        <ecNumber evidence="1">2.4.99.28</ecNumber>
    </recommendedName>
    <alternativeName>
        <fullName evidence="1">Glycan polymerase</fullName>
    </alternativeName>
    <alternativeName>
        <fullName evidence="1">Peptidoglycan glycosyltransferase MtgA</fullName>
        <shortName evidence="1">PGT</shortName>
    </alternativeName>
</protein>
<gene>
    <name evidence="1" type="primary">mtgA</name>
    <name type="ordered locus">Pfl01_5333</name>
</gene>
<proteinExistence type="inferred from homology"/>
<organism>
    <name type="scientific">Pseudomonas fluorescens (strain Pf0-1)</name>
    <dbReference type="NCBI Taxonomy" id="205922"/>
    <lineage>
        <taxon>Bacteria</taxon>
        <taxon>Pseudomonadati</taxon>
        <taxon>Pseudomonadota</taxon>
        <taxon>Gammaproteobacteria</taxon>
        <taxon>Pseudomonadales</taxon>
        <taxon>Pseudomonadaceae</taxon>
        <taxon>Pseudomonas</taxon>
    </lineage>
</organism>
<evidence type="ECO:0000255" key="1">
    <source>
        <dbReference type="HAMAP-Rule" id="MF_00766"/>
    </source>
</evidence>
<comment type="function">
    <text evidence="1">Peptidoglycan polymerase that catalyzes glycan chain elongation from lipid-linked precursors.</text>
</comment>
<comment type="catalytic activity">
    <reaction evidence="1">
        <text>[GlcNAc-(1-&gt;4)-Mur2Ac(oyl-L-Ala-gamma-D-Glu-L-Lys-D-Ala-D-Ala)](n)-di-trans,octa-cis-undecaprenyl diphosphate + beta-D-GlcNAc-(1-&gt;4)-Mur2Ac(oyl-L-Ala-gamma-D-Glu-L-Lys-D-Ala-D-Ala)-di-trans,octa-cis-undecaprenyl diphosphate = [GlcNAc-(1-&gt;4)-Mur2Ac(oyl-L-Ala-gamma-D-Glu-L-Lys-D-Ala-D-Ala)](n+1)-di-trans,octa-cis-undecaprenyl diphosphate + di-trans,octa-cis-undecaprenyl diphosphate + H(+)</text>
        <dbReference type="Rhea" id="RHEA:23708"/>
        <dbReference type="Rhea" id="RHEA-COMP:9602"/>
        <dbReference type="Rhea" id="RHEA-COMP:9603"/>
        <dbReference type="ChEBI" id="CHEBI:15378"/>
        <dbReference type="ChEBI" id="CHEBI:58405"/>
        <dbReference type="ChEBI" id="CHEBI:60033"/>
        <dbReference type="ChEBI" id="CHEBI:78435"/>
        <dbReference type="EC" id="2.4.99.28"/>
    </reaction>
</comment>
<comment type="pathway">
    <text evidence="1">Cell wall biogenesis; peptidoglycan biosynthesis.</text>
</comment>
<comment type="subcellular location">
    <subcellularLocation>
        <location evidence="1">Cell inner membrane</location>
        <topology evidence="1">Single-pass membrane protein</topology>
    </subcellularLocation>
</comment>
<comment type="similarity">
    <text evidence="1">Belongs to the glycosyltransferase 51 family.</text>
</comment>
<sequence>MLRLFLRRFTKALLWFAGGSVLLVLVFRFVPPPGTALMVERKIESWVDGEPIDLQRTWKPWDEISDDLKVAVIAGEDQKFPEHWGFDLSAIKAALAHNELGGSIRGASTLSQQVSKNLFLWSGRSYLRKGLEAWFTALIEVFWPKQRILEVYLNSVEWDDGVFGAEAAARHHFGVGARSLSRQQASYLAAVLPNPRVWSASHPTAYVSRRAGWIRQQMSQLGGDSYLLTLNDSRRAPWAQ</sequence>
<reference key="1">
    <citation type="journal article" date="2009" name="Genome Biol.">
        <title>Genomic and genetic analyses of diversity and plant interactions of Pseudomonas fluorescens.</title>
        <authorList>
            <person name="Silby M.W."/>
            <person name="Cerdeno-Tarraga A.M."/>
            <person name="Vernikos G.S."/>
            <person name="Giddens S.R."/>
            <person name="Jackson R.W."/>
            <person name="Preston G.M."/>
            <person name="Zhang X.-X."/>
            <person name="Moon C.D."/>
            <person name="Gehrig S.M."/>
            <person name="Godfrey S.A.C."/>
            <person name="Knight C.G."/>
            <person name="Malone J.G."/>
            <person name="Robinson Z."/>
            <person name="Spiers A.J."/>
            <person name="Harris S."/>
            <person name="Challis G.L."/>
            <person name="Yaxley A.M."/>
            <person name="Harris D."/>
            <person name="Seeger K."/>
            <person name="Murphy L."/>
            <person name="Rutter S."/>
            <person name="Squares R."/>
            <person name="Quail M.A."/>
            <person name="Saunders E."/>
            <person name="Mavromatis K."/>
            <person name="Brettin T.S."/>
            <person name="Bentley S.D."/>
            <person name="Hothersall J."/>
            <person name="Stephens E."/>
            <person name="Thomas C.M."/>
            <person name="Parkhill J."/>
            <person name="Levy S.B."/>
            <person name="Rainey P.B."/>
            <person name="Thomson N.R."/>
        </authorList>
    </citation>
    <scope>NUCLEOTIDE SEQUENCE [LARGE SCALE GENOMIC DNA]</scope>
    <source>
        <strain>Pf0-1</strain>
    </source>
</reference>
<accession>Q3K584</accession>
<feature type="chain" id="PRO_0000257680" description="Biosynthetic peptidoglycan transglycosylase">
    <location>
        <begin position="1"/>
        <end position="240"/>
    </location>
</feature>
<feature type="transmembrane region" description="Helical" evidence="1">
    <location>
        <begin position="12"/>
        <end position="31"/>
    </location>
</feature>
<name>MTGA_PSEPF</name>
<dbReference type="EC" id="2.4.99.28" evidence="1"/>
<dbReference type="EMBL" id="CP000094">
    <property type="protein sequence ID" value="ABA77070.1"/>
    <property type="molecule type" value="Genomic_DNA"/>
</dbReference>
<dbReference type="RefSeq" id="WP_007953390.1">
    <property type="nucleotide sequence ID" value="NC_007492.2"/>
</dbReference>
<dbReference type="SMR" id="Q3K584"/>
<dbReference type="CAZy" id="GT51">
    <property type="family name" value="Glycosyltransferase Family 51"/>
</dbReference>
<dbReference type="KEGG" id="pfo:Pfl01_5333"/>
<dbReference type="eggNOG" id="COG0744">
    <property type="taxonomic scope" value="Bacteria"/>
</dbReference>
<dbReference type="HOGENOM" id="CLU_006354_1_1_6"/>
<dbReference type="UniPathway" id="UPA00219"/>
<dbReference type="Proteomes" id="UP000002704">
    <property type="component" value="Chromosome"/>
</dbReference>
<dbReference type="GO" id="GO:0009274">
    <property type="term" value="C:peptidoglycan-based cell wall"/>
    <property type="evidence" value="ECO:0007669"/>
    <property type="project" value="InterPro"/>
</dbReference>
<dbReference type="GO" id="GO:0005886">
    <property type="term" value="C:plasma membrane"/>
    <property type="evidence" value="ECO:0007669"/>
    <property type="project" value="UniProtKB-SubCell"/>
</dbReference>
<dbReference type="GO" id="GO:0016763">
    <property type="term" value="F:pentosyltransferase activity"/>
    <property type="evidence" value="ECO:0007669"/>
    <property type="project" value="InterPro"/>
</dbReference>
<dbReference type="GO" id="GO:0008955">
    <property type="term" value="F:peptidoglycan glycosyltransferase activity"/>
    <property type="evidence" value="ECO:0007669"/>
    <property type="project" value="UniProtKB-UniRule"/>
</dbReference>
<dbReference type="GO" id="GO:0071555">
    <property type="term" value="P:cell wall organization"/>
    <property type="evidence" value="ECO:0007669"/>
    <property type="project" value="UniProtKB-KW"/>
</dbReference>
<dbReference type="GO" id="GO:0009252">
    <property type="term" value="P:peptidoglycan biosynthetic process"/>
    <property type="evidence" value="ECO:0007669"/>
    <property type="project" value="UniProtKB-UniRule"/>
</dbReference>
<dbReference type="GO" id="GO:0008360">
    <property type="term" value="P:regulation of cell shape"/>
    <property type="evidence" value="ECO:0007669"/>
    <property type="project" value="UniProtKB-KW"/>
</dbReference>
<dbReference type="Gene3D" id="1.10.3810.10">
    <property type="entry name" value="Biosynthetic peptidoglycan transglycosylase-like"/>
    <property type="match status" value="1"/>
</dbReference>
<dbReference type="HAMAP" id="MF_00766">
    <property type="entry name" value="PGT_MtgA"/>
    <property type="match status" value="1"/>
</dbReference>
<dbReference type="InterPro" id="IPR001264">
    <property type="entry name" value="Glyco_trans_51"/>
</dbReference>
<dbReference type="InterPro" id="IPR023346">
    <property type="entry name" value="Lysozyme-like_dom_sf"/>
</dbReference>
<dbReference type="InterPro" id="IPR036950">
    <property type="entry name" value="PBP_transglycosylase"/>
</dbReference>
<dbReference type="InterPro" id="IPR011812">
    <property type="entry name" value="Pep_trsgly"/>
</dbReference>
<dbReference type="NCBIfam" id="TIGR02070">
    <property type="entry name" value="mono_pep_trsgly"/>
    <property type="match status" value="1"/>
</dbReference>
<dbReference type="PANTHER" id="PTHR30400:SF0">
    <property type="entry name" value="BIOSYNTHETIC PEPTIDOGLYCAN TRANSGLYCOSYLASE"/>
    <property type="match status" value="1"/>
</dbReference>
<dbReference type="PANTHER" id="PTHR30400">
    <property type="entry name" value="MONOFUNCTIONAL BIOSYNTHETIC PEPTIDOGLYCAN TRANSGLYCOSYLASE"/>
    <property type="match status" value="1"/>
</dbReference>
<dbReference type="Pfam" id="PF00912">
    <property type="entry name" value="Transgly"/>
    <property type="match status" value="1"/>
</dbReference>
<dbReference type="SUPFAM" id="SSF53955">
    <property type="entry name" value="Lysozyme-like"/>
    <property type="match status" value="1"/>
</dbReference>